<dbReference type="EMBL" id="M31135">
    <property type="protein sequence ID" value="AAA35407.1"/>
    <property type="molecule type" value="mRNA"/>
</dbReference>
<dbReference type="EMBL" id="X73323">
    <property type="protein sequence ID" value="CAA51749.1"/>
    <property type="molecule type" value="mRNA"/>
</dbReference>
<dbReference type="PIR" id="B32722">
    <property type="entry name" value="RWCZT4"/>
</dbReference>
<dbReference type="RefSeq" id="NP_001009043.1">
    <property type="nucleotide sequence ID" value="NM_001009043.1"/>
</dbReference>
<dbReference type="RefSeq" id="XP_016777999.1">
    <property type="nucleotide sequence ID" value="XM_016922510.4"/>
</dbReference>
<dbReference type="RefSeq" id="XP_016778000.1">
    <property type="nucleotide sequence ID" value="XM_016922511.1"/>
</dbReference>
<dbReference type="SMR" id="P16004"/>
<dbReference type="FunCoup" id="P16004">
    <property type="interactions" value="683"/>
</dbReference>
<dbReference type="STRING" id="9598.ENSPTRP00000054833"/>
<dbReference type="GlyCosmos" id="P16004">
    <property type="glycosylation" value="2 sites, No reported glycans"/>
</dbReference>
<dbReference type="PaxDb" id="9598-ENSPTRP00000054833"/>
<dbReference type="Ensembl" id="ENSPTRT00000062277.3">
    <property type="protein sequence ID" value="ENSPTRP00000054833.3"/>
    <property type="gene ID" value="ENSPTRG00000004590.6"/>
</dbReference>
<dbReference type="GeneID" id="450124"/>
<dbReference type="KEGG" id="ptr:450124"/>
<dbReference type="CTD" id="920"/>
<dbReference type="VGNC" id="VGNC:5330">
    <property type="gene designation" value="CD4"/>
</dbReference>
<dbReference type="eggNOG" id="ENOG502S0W5">
    <property type="taxonomic scope" value="Eukaryota"/>
</dbReference>
<dbReference type="GeneTree" id="ENSGT00390000001745"/>
<dbReference type="InParanoid" id="P16004"/>
<dbReference type="OMA" id="KTCQCSH"/>
<dbReference type="OrthoDB" id="12545at9604"/>
<dbReference type="Proteomes" id="UP000002277">
    <property type="component" value="Chromosome 12"/>
</dbReference>
<dbReference type="Bgee" id="ENSPTRG00000004590">
    <property type="expression patterns" value="Expressed in thymus and 18 other cell types or tissues"/>
</dbReference>
<dbReference type="GO" id="GO:0005788">
    <property type="term" value="C:endoplasmic reticulum lumen"/>
    <property type="evidence" value="ECO:0007669"/>
    <property type="project" value="Ensembl"/>
</dbReference>
<dbReference type="GO" id="GO:0005789">
    <property type="term" value="C:endoplasmic reticulum membrane"/>
    <property type="evidence" value="ECO:0007669"/>
    <property type="project" value="Ensembl"/>
</dbReference>
<dbReference type="GO" id="GO:0009897">
    <property type="term" value="C:external side of plasma membrane"/>
    <property type="evidence" value="ECO:0007669"/>
    <property type="project" value="Ensembl"/>
</dbReference>
<dbReference type="GO" id="GO:0045121">
    <property type="term" value="C:membrane raft"/>
    <property type="evidence" value="ECO:0007669"/>
    <property type="project" value="Ensembl"/>
</dbReference>
<dbReference type="GO" id="GO:0015026">
    <property type="term" value="F:coreceptor activity"/>
    <property type="evidence" value="ECO:0007669"/>
    <property type="project" value="InterPro"/>
</dbReference>
<dbReference type="GO" id="GO:0042011">
    <property type="term" value="F:interleukin-16 binding"/>
    <property type="evidence" value="ECO:0007669"/>
    <property type="project" value="Ensembl"/>
</dbReference>
<dbReference type="GO" id="GO:0042012">
    <property type="term" value="F:interleukin-16 receptor activity"/>
    <property type="evidence" value="ECO:0007669"/>
    <property type="project" value="Ensembl"/>
</dbReference>
<dbReference type="GO" id="GO:0042289">
    <property type="term" value="F:MHC class II protein binding"/>
    <property type="evidence" value="ECO:0007669"/>
    <property type="project" value="Ensembl"/>
</dbReference>
<dbReference type="GO" id="GO:0023026">
    <property type="term" value="F:MHC class II protein complex binding"/>
    <property type="evidence" value="ECO:0000250"/>
    <property type="project" value="UniProtKB"/>
</dbReference>
<dbReference type="GO" id="GO:0042803">
    <property type="term" value="F:protein homodimerization activity"/>
    <property type="evidence" value="ECO:0007669"/>
    <property type="project" value="Ensembl"/>
</dbReference>
<dbReference type="GO" id="GO:1990782">
    <property type="term" value="F:protein tyrosine kinase binding"/>
    <property type="evidence" value="ECO:0007669"/>
    <property type="project" value="Ensembl"/>
</dbReference>
<dbReference type="GO" id="GO:0008270">
    <property type="term" value="F:zinc ion binding"/>
    <property type="evidence" value="ECO:0007669"/>
    <property type="project" value="Ensembl"/>
</dbReference>
<dbReference type="GO" id="GO:0002250">
    <property type="term" value="P:adaptive immune response"/>
    <property type="evidence" value="ECO:0007669"/>
    <property type="project" value="UniProtKB-KW"/>
</dbReference>
<dbReference type="GO" id="GO:0019722">
    <property type="term" value="P:calcium-mediated signaling"/>
    <property type="evidence" value="ECO:0007669"/>
    <property type="project" value="Ensembl"/>
</dbReference>
<dbReference type="GO" id="GO:0007155">
    <property type="term" value="P:cell adhesion"/>
    <property type="evidence" value="ECO:0007669"/>
    <property type="project" value="InterPro"/>
</dbReference>
<dbReference type="GO" id="GO:0097011">
    <property type="term" value="P:cellular response to granulocyte macrophage colony-stimulating factor stimulus"/>
    <property type="evidence" value="ECO:0007669"/>
    <property type="project" value="Ensembl"/>
</dbReference>
<dbReference type="GO" id="GO:0050829">
    <property type="term" value="P:defense response to Gram-negative bacterium"/>
    <property type="evidence" value="ECO:0007669"/>
    <property type="project" value="Ensembl"/>
</dbReference>
<dbReference type="GO" id="GO:0035397">
    <property type="term" value="P:helper T cell enhancement of adaptive immune response"/>
    <property type="evidence" value="ECO:0007669"/>
    <property type="project" value="Ensembl"/>
</dbReference>
<dbReference type="GO" id="GO:0035723">
    <property type="term" value="P:interleukin-15-mediated signaling pathway"/>
    <property type="evidence" value="ECO:0007669"/>
    <property type="project" value="Ensembl"/>
</dbReference>
<dbReference type="GO" id="GO:0030225">
    <property type="term" value="P:macrophage differentiation"/>
    <property type="evidence" value="ECO:0007669"/>
    <property type="project" value="Ensembl"/>
</dbReference>
<dbReference type="GO" id="GO:0032507">
    <property type="term" value="P:maintenance of protein location in cell"/>
    <property type="evidence" value="ECO:0007669"/>
    <property type="project" value="Ensembl"/>
</dbReference>
<dbReference type="GO" id="GO:0050850">
    <property type="term" value="P:positive regulation of calcium-mediated signaling"/>
    <property type="evidence" value="ECO:0007669"/>
    <property type="project" value="Ensembl"/>
</dbReference>
<dbReference type="GO" id="GO:0043123">
    <property type="term" value="P:positive regulation of canonical NF-kappaB signal transduction"/>
    <property type="evidence" value="ECO:0007669"/>
    <property type="project" value="Ensembl"/>
</dbReference>
<dbReference type="GO" id="GO:0045893">
    <property type="term" value="P:positive regulation of DNA-templated transcription"/>
    <property type="evidence" value="ECO:0007669"/>
    <property type="project" value="Ensembl"/>
</dbReference>
<dbReference type="GO" id="GO:0070374">
    <property type="term" value="P:positive regulation of ERK1 and ERK2 cascade"/>
    <property type="evidence" value="ECO:0007669"/>
    <property type="project" value="Ensembl"/>
</dbReference>
<dbReference type="GO" id="GO:0045657">
    <property type="term" value="P:positive regulation of monocyte differentiation"/>
    <property type="evidence" value="ECO:0007669"/>
    <property type="project" value="Ensembl"/>
</dbReference>
<dbReference type="GO" id="GO:0050870">
    <property type="term" value="P:positive regulation of T cell activation"/>
    <property type="evidence" value="ECO:0007669"/>
    <property type="project" value="Ensembl"/>
</dbReference>
<dbReference type="GO" id="GO:0046598">
    <property type="term" value="P:positive regulation of viral entry into host cell"/>
    <property type="evidence" value="ECO:0007669"/>
    <property type="project" value="Ensembl"/>
</dbReference>
<dbReference type="GO" id="GO:0051924">
    <property type="term" value="P:regulation of calcium ion transport"/>
    <property type="evidence" value="ECO:0007669"/>
    <property type="project" value="Ensembl"/>
</dbReference>
<dbReference type="GO" id="GO:0030217">
    <property type="term" value="P:T cell differentiation"/>
    <property type="evidence" value="ECO:0000250"/>
    <property type="project" value="UniProtKB"/>
</dbReference>
<dbReference type="GO" id="GO:0045058">
    <property type="term" value="P:T cell selection"/>
    <property type="evidence" value="ECO:0000250"/>
    <property type="project" value="UniProtKB"/>
</dbReference>
<dbReference type="CDD" id="cd22570">
    <property type="entry name" value="CD4_CD"/>
    <property type="match status" value="1"/>
</dbReference>
<dbReference type="CDD" id="cd07694">
    <property type="entry name" value="IgC2_2_CD4"/>
    <property type="match status" value="1"/>
</dbReference>
<dbReference type="CDD" id="cd07690">
    <property type="entry name" value="IgV_1_CD4"/>
    <property type="match status" value="1"/>
</dbReference>
<dbReference type="CDD" id="cd07695">
    <property type="entry name" value="IgV_3_CD4"/>
    <property type="match status" value="1"/>
</dbReference>
<dbReference type="FunFam" id="1.20.5.900:FF:000001">
    <property type="entry name" value="T-cell surface glycoprotein CD4"/>
    <property type="match status" value="1"/>
</dbReference>
<dbReference type="FunFam" id="2.60.40.10:FF:001105">
    <property type="entry name" value="T-cell surface glycoprotein CD4"/>
    <property type="match status" value="1"/>
</dbReference>
<dbReference type="FunFam" id="2.60.40.10:FF:001204">
    <property type="entry name" value="T-cell surface glycoprotein CD4"/>
    <property type="match status" value="1"/>
</dbReference>
<dbReference type="FunFam" id="2.60.40.10:FF:001221">
    <property type="entry name" value="T-cell surface glycoprotein CD4"/>
    <property type="match status" value="1"/>
</dbReference>
<dbReference type="FunFam" id="2.60.40.10:FF:001253">
    <property type="entry name" value="T-cell surface glycoprotein CD4"/>
    <property type="match status" value="1"/>
</dbReference>
<dbReference type="Gene3D" id="2.60.40.10">
    <property type="entry name" value="Immunoglobulins"/>
    <property type="match status" value="4"/>
</dbReference>
<dbReference type="Gene3D" id="1.20.5.900">
    <property type="entry name" value="transmembrane domain of human cd4"/>
    <property type="match status" value="1"/>
</dbReference>
<dbReference type="InterPro" id="IPR000973">
    <property type="entry name" value="CD4"/>
</dbReference>
<dbReference type="InterPro" id="IPR015274">
    <property type="entry name" value="CD4-extracel"/>
</dbReference>
<dbReference type="InterPro" id="IPR007110">
    <property type="entry name" value="Ig-like_dom"/>
</dbReference>
<dbReference type="InterPro" id="IPR036179">
    <property type="entry name" value="Ig-like_dom_sf"/>
</dbReference>
<dbReference type="InterPro" id="IPR013783">
    <property type="entry name" value="Ig-like_fold"/>
</dbReference>
<dbReference type="InterPro" id="IPR008424">
    <property type="entry name" value="Ig_C2-set"/>
</dbReference>
<dbReference type="InterPro" id="IPR003599">
    <property type="entry name" value="Ig_sub"/>
</dbReference>
<dbReference type="InterPro" id="IPR003598">
    <property type="entry name" value="Ig_sub2"/>
</dbReference>
<dbReference type="InterPro" id="IPR013106">
    <property type="entry name" value="Ig_V-set"/>
</dbReference>
<dbReference type="InterPro" id="IPR013151">
    <property type="entry name" value="Immunoglobulin_dom"/>
</dbReference>
<dbReference type="InterPro" id="IPR021963">
    <property type="entry name" value="Tcell_CD4_Cterm"/>
</dbReference>
<dbReference type="PANTHER" id="PTHR11422">
    <property type="entry name" value="T-CELL SURFACE GLYCOPROTEIN CD4"/>
    <property type="match status" value="1"/>
</dbReference>
<dbReference type="PANTHER" id="PTHR11422:SF0">
    <property type="entry name" value="T-CELL SURFACE GLYCOPROTEIN CD4"/>
    <property type="match status" value="1"/>
</dbReference>
<dbReference type="Pfam" id="PF05790">
    <property type="entry name" value="C2-set"/>
    <property type="match status" value="2"/>
</dbReference>
<dbReference type="Pfam" id="PF09191">
    <property type="entry name" value="CD4-extracel"/>
    <property type="match status" value="1"/>
</dbReference>
<dbReference type="Pfam" id="PF00047">
    <property type="entry name" value="ig"/>
    <property type="match status" value="1"/>
</dbReference>
<dbReference type="Pfam" id="PF12104">
    <property type="entry name" value="Tcell_CD4_C"/>
    <property type="match status" value="1"/>
</dbReference>
<dbReference type="PRINTS" id="PR00692">
    <property type="entry name" value="CD4TCANTIGEN"/>
</dbReference>
<dbReference type="SMART" id="SM00409">
    <property type="entry name" value="IG"/>
    <property type="match status" value="3"/>
</dbReference>
<dbReference type="SMART" id="SM00408">
    <property type="entry name" value="IGc2"/>
    <property type="match status" value="2"/>
</dbReference>
<dbReference type="SMART" id="SM00406">
    <property type="entry name" value="IGv"/>
    <property type="match status" value="1"/>
</dbReference>
<dbReference type="SUPFAM" id="SSF48726">
    <property type="entry name" value="Immunoglobulin"/>
    <property type="match status" value="4"/>
</dbReference>
<dbReference type="PROSITE" id="PS50835">
    <property type="entry name" value="IG_LIKE"/>
    <property type="match status" value="1"/>
</dbReference>
<accession>P16004</accession>
<reference key="1">
    <citation type="journal article" date="1990" name="Cell">
        <title>A CD4 domain important for HIV-mediated syncytium formation lies outside the virus binding site.</title>
        <authorList>
            <person name="Camerini D."/>
            <person name="Seed B."/>
        </authorList>
    </citation>
    <scope>NUCLEOTIDE SEQUENCE [MRNA]</scope>
</reference>
<reference key="2">
    <citation type="journal article" date="1992" name="Eur. J. Immunol.">
        <title>Cloning and sequences of primate CD4 molecules: diversity of the cellular receptor for simian immunodeficiency virus/human immunodeficiency virus.</title>
        <authorList>
            <person name="Fomsgaard A."/>
            <person name="Hirsch V.M."/>
            <person name="Johnson P.R."/>
        </authorList>
    </citation>
    <scope>NUCLEOTIDE SEQUENCE [MRNA] OF 26-424</scope>
    <source>
        <tissue>Blood</tissue>
    </source>
</reference>
<comment type="function">
    <text evidence="2">Integral membrane glycoprotein that plays an essential role in the immune response and serves multiple functions in responses against both external and internal offenses. In T-cells, functions primarily as a coreceptor for MHC class II molecule:peptide complex. The antigens presented by class II peptides are derived from extracellular proteins while class I peptides are derived from cytosolic proteins. Interacts simultaneously with the T-cell receptor (TCR) and the MHC class II presented by antigen presenting cells (APCs). In turn, recruits the Src kinase LCK to the vicinity of the TCR-CD3 complex. LCK then initiates different intracellular signaling pathways by phosphorylating various substrates ultimately leading to lymphokine production, motility, adhesion and activation of T-helper cells. In other cells such as macrophages or NK cells, plays a role in differentiation/activation, cytokine expression and cell migration in a TCR/LCK-independent pathway. Participates in the development of T-helper cells in the thymus and triggers the differentiation of monocytes into functional mature macrophages.</text>
</comment>
<comment type="subunit">
    <text evidence="2">Forms disulfide-linked homodimers at the cell surface. Interacts with LCK. Interacts with PTK2/FAK1. Binds to P4HB/PDI. Interacts with IL16; this interaction induces a CD4-dependent signaling in lymphocytes. Interacts (via Ig-like V-type domain) with MHCII alpha chain (via alpha-2 domain) and beta chain (via beta-2 domain); this interaction increases the affinity of TCR for peptide-MHCII. CD4 oligomerization via Ig-like C2-type 2 and 3 domains appears to be required for stable binding to MHCII and adhesion between T cells and APCs.</text>
</comment>
<comment type="subcellular location">
    <subcellularLocation>
        <location evidence="2">Cell membrane</location>
        <topology evidence="2">Single-pass type I membrane protein</topology>
    </subcellularLocation>
    <text evidence="2">Localizes to lipid rafts.</text>
</comment>
<comment type="domain">
    <text evidence="2">The Ig-like V-type domain mediates the interaction with MHCII.</text>
</comment>
<comment type="PTM">
    <text evidence="2">Palmitoylation and association with LCK contribute to the enrichment of CD4 in lipid rafts.</text>
</comment>
<comment type="PTM">
    <text evidence="2">Phosphorylated by PKC; phosphorylation plays an important role for CD4 internalization.</text>
</comment>
<evidence type="ECO:0000250" key="1"/>
<evidence type="ECO:0000250" key="2">
    <source>
        <dbReference type="UniProtKB" id="P01730"/>
    </source>
</evidence>
<evidence type="ECO:0000255" key="3"/>
<evidence type="ECO:0000255" key="4">
    <source>
        <dbReference type="PROSITE-ProRule" id="PRU00114"/>
    </source>
</evidence>
<evidence type="ECO:0000305" key="5"/>
<organism>
    <name type="scientific">Pan troglodytes</name>
    <name type="common">Chimpanzee</name>
    <dbReference type="NCBI Taxonomy" id="9598"/>
    <lineage>
        <taxon>Eukaryota</taxon>
        <taxon>Metazoa</taxon>
        <taxon>Chordata</taxon>
        <taxon>Craniata</taxon>
        <taxon>Vertebrata</taxon>
        <taxon>Euteleostomi</taxon>
        <taxon>Mammalia</taxon>
        <taxon>Eutheria</taxon>
        <taxon>Euarchontoglires</taxon>
        <taxon>Primates</taxon>
        <taxon>Haplorrhini</taxon>
        <taxon>Catarrhini</taxon>
        <taxon>Hominidae</taxon>
        <taxon>Pan</taxon>
    </lineage>
</organism>
<feature type="signal peptide" evidence="1">
    <location>
        <begin position="1"/>
        <end position="25"/>
    </location>
</feature>
<feature type="chain" id="PRO_0000014626" description="T-cell surface glycoprotein CD4">
    <location>
        <begin position="26"/>
        <end position="458"/>
    </location>
</feature>
<feature type="topological domain" description="Extracellular" evidence="3">
    <location>
        <begin position="26"/>
        <end position="396"/>
    </location>
</feature>
<feature type="transmembrane region" description="Helical" evidence="3">
    <location>
        <begin position="397"/>
        <end position="418"/>
    </location>
</feature>
<feature type="topological domain" description="Cytoplasmic" evidence="3">
    <location>
        <begin position="419"/>
        <end position="458"/>
    </location>
</feature>
<feature type="domain" description="Ig-like V-type">
    <location>
        <begin position="26"/>
        <end position="125"/>
    </location>
</feature>
<feature type="domain" description="Ig-like C2-type 1">
    <location>
        <begin position="126"/>
        <end position="203"/>
    </location>
</feature>
<feature type="domain" description="Ig-like C2-type 2">
    <location>
        <begin position="204"/>
        <end position="317"/>
    </location>
</feature>
<feature type="domain" description="Ig-like C2-type 3">
    <location>
        <begin position="318"/>
        <end position="374"/>
    </location>
</feature>
<feature type="modified residue" description="Phosphoserine" evidence="2">
    <location>
        <position position="433"/>
    </location>
</feature>
<feature type="modified residue" description="Phosphoserine" evidence="2">
    <location>
        <position position="440"/>
    </location>
</feature>
<feature type="modified residue" description="Phosphoserine" evidence="2">
    <location>
        <position position="456"/>
    </location>
</feature>
<feature type="lipid moiety-binding region" description="S-palmitoyl cysteine" evidence="1">
    <location>
        <position position="419"/>
    </location>
</feature>
<feature type="lipid moiety-binding region" description="S-palmitoyl cysteine" evidence="1">
    <location>
        <position position="422"/>
    </location>
</feature>
<feature type="glycosylation site" description="N-linked (GlcNAc...) asparagine" evidence="1">
    <location>
        <position position="296"/>
    </location>
</feature>
<feature type="glycosylation site" description="N-linked (GlcNAc...) asparagine" evidence="1">
    <location>
        <position position="325"/>
    </location>
</feature>
<feature type="disulfide bond" evidence="4">
    <location>
        <begin position="41"/>
        <end position="109"/>
    </location>
</feature>
<feature type="disulfide bond" evidence="4">
    <location>
        <begin position="155"/>
        <end position="184"/>
    </location>
</feature>
<feature type="disulfide bond" evidence="4">
    <location>
        <begin position="328"/>
        <end position="370"/>
    </location>
</feature>
<feature type="sequence conflict" description="In Ref. 2." evidence="5" ref="2">
    <original>T</original>
    <variation>N</variation>
    <location>
        <position position="42"/>
    </location>
</feature>
<feature type="sequence conflict" description="In Ref. 2." evidence="5" ref="2">
    <original>L</original>
    <variation>S</variation>
    <location>
        <position position="62"/>
    </location>
</feature>
<feature type="sequence conflict" description="In Ref. 2." evidence="5" ref="2">
    <original>K</original>
    <variation>N</variation>
    <location>
        <position position="191"/>
    </location>
</feature>
<name>CD4_PANTR</name>
<proteinExistence type="evidence at transcript level"/>
<gene>
    <name type="primary">CD4</name>
</gene>
<keyword id="KW-1064">Adaptive immunity</keyword>
<keyword id="KW-1003">Cell membrane</keyword>
<keyword id="KW-1015">Disulfide bond</keyword>
<keyword id="KW-0325">Glycoprotein</keyword>
<keyword id="KW-0391">Immunity</keyword>
<keyword id="KW-0393">Immunoglobulin domain</keyword>
<keyword id="KW-0449">Lipoprotein</keyword>
<keyword id="KW-0472">Membrane</keyword>
<keyword id="KW-0564">Palmitate</keyword>
<keyword id="KW-0597">Phosphoprotein</keyword>
<keyword id="KW-1185">Reference proteome</keyword>
<keyword id="KW-0677">Repeat</keyword>
<keyword id="KW-0732">Signal</keyword>
<keyword id="KW-0812">Transmembrane</keyword>
<keyword id="KW-1133">Transmembrane helix</keyword>
<sequence length="458" mass="51057">MNRGVPFRHLLLVLQLALLPAATQGKKVVLGKKGDTVELTCTASQKKSIQFHWKNSNQTKILGNQGSFLTKGPSKLNDRVDSRRSLWDQGNFTLIIKNLKIEDSDTYICEVGDQKEEVQLLVFGLTANSDTHLLQGQSLTLTLESPPGSSPSVQCRSPRGKNIQGGKTLSVSQLELQDSGTWTCTVLQNQKKVEFKIDIVVLAFQKASSIVYKKEGEQVEFSFPLAFTVEKLTGSGELWWQAERASSSKSWITFDLKNKEVSVKRVTQDPKLQMGKKLPLHLTLPQALPQYAGSGNLTLALEAKTGKLHQEVNLVVMRATQLQKNLTCEVWGPTSPKLMLSLKLENKEAKVSKREKAVWVLNPEAGMWQCLLSDSGQVLLESNIKVLPTWSTPVQPMALIVLGGVAGLLLFIGLGIFFCVRCRHRRRQAQRMSQIKRLLSEKKTCQCPHRFQKTCSPI</sequence>
<protein>
    <recommendedName>
        <fullName>T-cell surface glycoprotein CD4</fullName>
    </recommendedName>
    <alternativeName>
        <fullName>T-cell surface antigen T4/Leu-3</fullName>
    </alternativeName>
    <cdAntigenName>CD4</cdAntigenName>
</protein>